<protein>
    <recommendedName>
        <fullName evidence="1">tRNA 5-methylaminomethyl-2-thiouridine biosynthesis bifunctional protein MnmC</fullName>
        <shortName evidence="1">tRNA mnm(5)s(2)U biosynthesis bifunctional protein</shortName>
    </recommendedName>
    <domain>
        <recommendedName>
            <fullName evidence="1">tRNA (mnm(5)s(2)U34)-methyltransferase</fullName>
            <ecNumber evidence="1">2.1.1.61</ecNumber>
        </recommendedName>
    </domain>
    <domain>
        <recommendedName>
            <fullName evidence="1">FAD-dependent cmnm(5)s(2)U34 oxidoreductase</fullName>
            <ecNumber evidence="1">1.5.-.-</ecNumber>
        </recommendedName>
    </domain>
</protein>
<proteinExistence type="inferred from homology"/>
<organism>
    <name type="scientific">Salmonella typhi</name>
    <dbReference type="NCBI Taxonomy" id="90370"/>
    <lineage>
        <taxon>Bacteria</taxon>
        <taxon>Pseudomonadati</taxon>
        <taxon>Pseudomonadota</taxon>
        <taxon>Gammaproteobacteria</taxon>
        <taxon>Enterobacterales</taxon>
        <taxon>Enterobacteriaceae</taxon>
        <taxon>Salmonella</taxon>
    </lineage>
</organism>
<keyword id="KW-0963">Cytoplasm</keyword>
<keyword id="KW-0274">FAD</keyword>
<keyword id="KW-0285">Flavoprotein</keyword>
<keyword id="KW-0489">Methyltransferase</keyword>
<keyword id="KW-0511">Multifunctional enzyme</keyword>
<keyword id="KW-0560">Oxidoreductase</keyword>
<keyword id="KW-0949">S-adenosyl-L-methionine</keyword>
<keyword id="KW-0808">Transferase</keyword>
<keyword id="KW-0819">tRNA processing</keyword>
<name>MNMC_SALTI</name>
<gene>
    <name evidence="1" type="primary">mnmC</name>
    <name type="ordered locus">STY2610</name>
    <name type="ordered locus">t0485</name>
</gene>
<sequence>MKQYAIQPATLEFNAEGTPVSRDFDDVYFSNDNGLEETRYVFLGGNRLAERFPVHSHPLFIVAESGFGTGLNFLTLWQAFDSFRSAHPQATLQRLHFISFEKFPLTRDDLALAHQHWPELAPWAEQLQAQWPLPLPGCHRLLLDRGRVTLDLWFGDINELTDQLDATLNQTVDAWFLDGFAPAKNPDMWTPNLFNAMARLARPGATLATFTSAGFVRRGLQEAGFTMQKHKGFGRKREMLCGVMEQHLMPTLSAPWFYCSGSEKRETAIIGGGIASALLSLALLRRGWQVTLYCADDQPAQGASGNRQGALYPLLSKHDAAINRFFPTAFTFARRLYDALPVSFDHAWCGVTQLGWDEKSQQKIAQMLSLALPAGLASALNAEEAEQAVGVTTRCGGITYPAGGWLCPEQLTRAVIALATEQGLQTRFRHTLTSLVAQESRWQLRFTSGETASHETVVLANGHQINRFDQTRPLPVYAVGGQVSHIPTTPALSALRQVLCYDGYLTPQNPHNQQHCIGASYHRGDESTVWREEDQRQNRQRLLDCFPDANWATEVDVSGNSARCGVRCATRDHLPMVGNVPDYHATLTHYADLADNKTSAASAPVYPGLFMLGALGSRGLCSAPLCAEILAAQMSNEPIPLDAGTLAALNPNRLWVRKLLKGKAVK</sequence>
<comment type="function">
    <text evidence="1">Catalyzes the last two steps in the biosynthesis of 5-methylaminomethyl-2-thiouridine (mnm(5)s(2)U) at the wobble position (U34) in tRNA. Catalyzes the FAD-dependent demodification of cmnm(5)s(2)U34 to nm(5)s(2)U34, followed by the transfer of a methyl group from S-adenosyl-L-methionine to nm(5)s(2)U34, to form mnm(5)s(2)U34.</text>
</comment>
<comment type="catalytic activity">
    <reaction evidence="1">
        <text>5-aminomethyl-2-thiouridine(34) in tRNA + S-adenosyl-L-methionine = 5-methylaminomethyl-2-thiouridine(34) in tRNA + S-adenosyl-L-homocysteine + H(+)</text>
        <dbReference type="Rhea" id="RHEA:19569"/>
        <dbReference type="Rhea" id="RHEA-COMP:10195"/>
        <dbReference type="Rhea" id="RHEA-COMP:10197"/>
        <dbReference type="ChEBI" id="CHEBI:15378"/>
        <dbReference type="ChEBI" id="CHEBI:57856"/>
        <dbReference type="ChEBI" id="CHEBI:59789"/>
        <dbReference type="ChEBI" id="CHEBI:74454"/>
        <dbReference type="ChEBI" id="CHEBI:74455"/>
        <dbReference type="EC" id="2.1.1.61"/>
    </reaction>
</comment>
<comment type="cofactor">
    <cofactor evidence="1">
        <name>FAD</name>
        <dbReference type="ChEBI" id="CHEBI:57692"/>
    </cofactor>
</comment>
<comment type="subcellular location">
    <subcellularLocation>
        <location evidence="1">Cytoplasm</location>
    </subcellularLocation>
</comment>
<comment type="similarity">
    <text evidence="1">In the N-terminal section; belongs to the methyltransferase superfamily. tRNA (mnm(5)s(2)U34)-methyltransferase family.</text>
</comment>
<comment type="similarity">
    <text evidence="1">In the C-terminal section; belongs to the DAO family.</text>
</comment>
<comment type="sequence caution" evidence="2">
    <conflict type="erroneous initiation">
        <sequence resource="EMBL-CDS" id="AAO68191"/>
    </conflict>
</comment>
<comment type="sequence caution" evidence="2">
    <conflict type="erroneous initiation">
        <sequence resource="EMBL-CDS" id="CAD07611"/>
    </conflict>
</comment>
<dbReference type="EC" id="2.1.1.61" evidence="1"/>
<dbReference type="EC" id="1.5.-.-" evidence="1"/>
<dbReference type="EMBL" id="AL513382">
    <property type="protein sequence ID" value="CAD07611.1"/>
    <property type="status" value="ALT_INIT"/>
    <property type="molecule type" value="Genomic_DNA"/>
</dbReference>
<dbReference type="EMBL" id="AE014613">
    <property type="protein sequence ID" value="AAO68191.1"/>
    <property type="status" value="ALT_INIT"/>
    <property type="molecule type" value="Genomic_DNA"/>
</dbReference>
<dbReference type="PIR" id="AI0803">
    <property type="entry name" value="AI0803"/>
</dbReference>
<dbReference type="RefSeq" id="NP_456921.3">
    <property type="nucleotide sequence ID" value="NC_003198.1"/>
</dbReference>
<dbReference type="RefSeq" id="WP_000816082.1">
    <property type="nucleotide sequence ID" value="NZ_WSUQ01000009.1"/>
</dbReference>
<dbReference type="SMR" id="Q8Z4Z3"/>
<dbReference type="STRING" id="220341.gene:17586508"/>
<dbReference type="KEGG" id="stt:t0485"/>
<dbReference type="KEGG" id="sty:STY2610"/>
<dbReference type="PATRIC" id="fig|220341.7.peg.2643"/>
<dbReference type="eggNOG" id="COG0665">
    <property type="taxonomic scope" value="Bacteria"/>
</dbReference>
<dbReference type="eggNOG" id="COG4121">
    <property type="taxonomic scope" value="Bacteria"/>
</dbReference>
<dbReference type="HOGENOM" id="CLU_022427_1_0_6"/>
<dbReference type="OMA" id="NFLCAWQ"/>
<dbReference type="Proteomes" id="UP000000541">
    <property type="component" value="Chromosome"/>
</dbReference>
<dbReference type="Proteomes" id="UP000002670">
    <property type="component" value="Chromosome"/>
</dbReference>
<dbReference type="GO" id="GO:0005737">
    <property type="term" value="C:cytoplasm"/>
    <property type="evidence" value="ECO:0007669"/>
    <property type="project" value="UniProtKB-SubCell"/>
</dbReference>
<dbReference type="GO" id="GO:0050660">
    <property type="term" value="F:flavin adenine dinucleotide binding"/>
    <property type="evidence" value="ECO:0007669"/>
    <property type="project" value="UniProtKB-UniRule"/>
</dbReference>
<dbReference type="GO" id="GO:0016645">
    <property type="term" value="F:oxidoreductase activity, acting on the CH-NH group of donors"/>
    <property type="evidence" value="ECO:0007669"/>
    <property type="project" value="InterPro"/>
</dbReference>
<dbReference type="GO" id="GO:0004808">
    <property type="term" value="F:tRNA (5-methylaminomethyl-2-thiouridylate)(34)-methyltransferase activity"/>
    <property type="evidence" value="ECO:0007669"/>
    <property type="project" value="UniProtKB-EC"/>
</dbReference>
<dbReference type="GO" id="GO:0032259">
    <property type="term" value="P:methylation"/>
    <property type="evidence" value="ECO:0007669"/>
    <property type="project" value="UniProtKB-KW"/>
</dbReference>
<dbReference type="GO" id="GO:0002098">
    <property type="term" value="P:tRNA wobble uridine modification"/>
    <property type="evidence" value="ECO:0007669"/>
    <property type="project" value="TreeGrafter"/>
</dbReference>
<dbReference type="FunFam" id="3.40.50.150:FF:000107">
    <property type="entry name" value="tRNA 5-methylaminomethyl-2-thiouridine biosynthesis bifunctional protein MnmC"/>
    <property type="match status" value="1"/>
</dbReference>
<dbReference type="Gene3D" id="3.30.9.10">
    <property type="entry name" value="D-Amino Acid Oxidase, subunit A, domain 2"/>
    <property type="match status" value="1"/>
</dbReference>
<dbReference type="Gene3D" id="3.50.50.60">
    <property type="entry name" value="FAD/NAD(P)-binding domain"/>
    <property type="match status" value="1"/>
</dbReference>
<dbReference type="Gene3D" id="3.40.50.150">
    <property type="entry name" value="Vaccinia Virus protein VP39"/>
    <property type="match status" value="1"/>
</dbReference>
<dbReference type="HAMAP" id="MF_01102">
    <property type="entry name" value="MnmC"/>
    <property type="match status" value="1"/>
</dbReference>
<dbReference type="InterPro" id="IPR006076">
    <property type="entry name" value="FAD-dep_OxRdtase"/>
</dbReference>
<dbReference type="InterPro" id="IPR036188">
    <property type="entry name" value="FAD/NAD-bd_sf"/>
</dbReference>
<dbReference type="InterPro" id="IPR008471">
    <property type="entry name" value="MnmC-like_methylTransf"/>
</dbReference>
<dbReference type="InterPro" id="IPR029063">
    <property type="entry name" value="SAM-dependent_MTases_sf"/>
</dbReference>
<dbReference type="InterPro" id="IPR023032">
    <property type="entry name" value="tRNA_MAMT_biosynth_bifunc_MnmC"/>
</dbReference>
<dbReference type="InterPro" id="IPR047785">
    <property type="entry name" value="tRNA_MNMC2"/>
</dbReference>
<dbReference type="InterPro" id="IPR017610">
    <property type="entry name" value="tRNA_S-uridine_synth_MnmC_C"/>
</dbReference>
<dbReference type="NCBIfam" id="TIGR03197">
    <property type="entry name" value="MnmC_Cterm"/>
    <property type="match status" value="1"/>
</dbReference>
<dbReference type="NCBIfam" id="NF002480">
    <property type="entry name" value="PRK01747.1-1"/>
    <property type="match status" value="1"/>
</dbReference>
<dbReference type="NCBIfam" id="NF002481">
    <property type="entry name" value="PRK01747.1-2"/>
    <property type="match status" value="1"/>
</dbReference>
<dbReference type="NCBIfam" id="NF002482">
    <property type="entry name" value="PRK01747.1-3"/>
    <property type="match status" value="1"/>
</dbReference>
<dbReference type="NCBIfam" id="NF002484">
    <property type="entry name" value="PRK01747.1-5"/>
    <property type="match status" value="1"/>
</dbReference>
<dbReference type="NCBIfam" id="NF033855">
    <property type="entry name" value="tRNA_MNMC2"/>
    <property type="match status" value="1"/>
</dbReference>
<dbReference type="PANTHER" id="PTHR13847">
    <property type="entry name" value="SARCOSINE DEHYDROGENASE-RELATED"/>
    <property type="match status" value="1"/>
</dbReference>
<dbReference type="PANTHER" id="PTHR13847:SF283">
    <property type="entry name" value="TRNA 5-METHYLAMINOMETHYL-2-THIOURIDINE BIOSYNTHESIS BIFUNCTIONAL PROTEIN MNMC"/>
    <property type="match status" value="1"/>
</dbReference>
<dbReference type="Pfam" id="PF01266">
    <property type="entry name" value="DAO"/>
    <property type="match status" value="1"/>
</dbReference>
<dbReference type="Pfam" id="PF05430">
    <property type="entry name" value="Methyltransf_30"/>
    <property type="match status" value="1"/>
</dbReference>
<dbReference type="SUPFAM" id="SSF51905">
    <property type="entry name" value="FAD/NAD(P)-binding domain"/>
    <property type="match status" value="1"/>
</dbReference>
<accession>Q8Z4Z3</accession>
<reference key="1">
    <citation type="journal article" date="2001" name="Nature">
        <title>Complete genome sequence of a multiple drug resistant Salmonella enterica serovar Typhi CT18.</title>
        <authorList>
            <person name="Parkhill J."/>
            <person name="Dougan G."/>
            <person name="James K.D."/>
            <person name="Thomson N.R."/>
            <person name="Pickard D."/>
            <person name="Wain J."/>
            <person name="Churcher C.M."/>
            <person name="Mungall K.L."/>
            <person name="Bentley S.D."/>
            <person name="Holden M.T.G."/>
            <person name="Sebaihia M."/>
            <person name="Baker S."/>
            <person name="Basham D."/>
            <person name="Brooks K."/>
            <person name="Chillingworth T."/>
            <person name="Connerton P."/>
            <person name="Cronin A."/>
            <person name="Davis P."/>
            <person name="Davies R.M."/>
            <person name="Dowd L."/>
            <person name="White N."/>
            <person name="Farrar J."/>
            <person name="Feltwell T."/>
            <person name="Hamlin N."/>
            <person name="Haque A."/>
            <person name="Hien T.T."/>
            <person name="Holroyd S."/>
            <person name="Jagels K."/>
            <person name="Krogh A."/>
            <person name="Larsen T.S."/>
            <person name="Leather S."/>
            <person name="Moule S."/>
            <person name="O'Gaora P."/>
            <person name="Parry C."/>
            <person name="Quail M.A."/>
            <person name="Rutherford K.M."/>
            <person name="Simmonds M."/>
            <person name="Skelton J."/>
            <person name="Stevens K."/>
            <person name="Whitehead S."/>
            <person name="Barrell B.G."/>
        </authorList>
    </citation>
    <scope>NUCLEOTIDE SEQUENCE [LARGE SCALE GENOMIC DNA]</scope>
    <source>
        <strain>CT18</strain>
    </source>
</reference>
<reference key="2">
    <citation type="journal article" date="2003" name="J. Bacteriol.">
        <title>Comparative genomics of Salmonella enterica serovar Typhi strains Ty2 and CT18.</title>
        <authorList>
            <person name="Deng W."/>
            <person name="Liou S.-R."/>
            <person name="Plunkett G. III"/>
            <person name="Mayhew G.F."/>
            <person name="Rose D.J."/>
            <person name="Burland V."/>
            <person name="Kodoyianni V."/>
            <person name="Schwartz D.C."/>
            <person name="Blattner F.R."/>
        </authorList>
    </citation>
    <scope>NUCLEOTIDE SEQUENCE [LARGE SCALE GENOMIC DNA]</scope>
    <source>
        <strain>ATCC 700931 / Ty2</strain>
    </source>
</reference>
<feature type="chain" id="PRO_0000095026" description="tRNA 5-methylaminomethyl-2-thiouridine biosynthesis bifunctional protein MnmC">
    <location>
        <begin position="1"/>
        <end position="666"/>
    </location>
</feature>
<feature type="region of interest" description="tRNA (mnm(5)s(2)U34)-methyltransferase">
    <location>
        <begin position="1"/>
        <end position="245"/>
    </location>
</feature>
<feature type="region of interest" description="FAD-dependent cmnm(5)s(2)U34 oxidoreductase">
    <location>
        <begin position="270"/>
        <end position="666"/>
    </location>
</feature>
<evidence type="ECO:0000255" key="1">
    <source>
        <dbReference type="HAMAP-Rule" id="MF_01102"/>
    </source>
</evidence>
<evidence type="ECO:0000305" key="2"/>